<proteinExistence type="inferred from homology"/>
<sequence length="237" mass="26762">MDIKLVYSTSDPVGLTIKKLGYSFEEIDEDVTDFHYKNGEAIVIFSRHESKASIPSLTVHYPGNPSEEVMGGEPKKLGIAYPRLLTSILREIKKIDLDIEKTMEATHHGPTYQNVPVIFVEIGSDKTYWTNERIVRTLVDSTLKGIDKVDETDCRDYISGFGGPHYSKLFTKLADESCIGHVISKHYVDKLDDKVIIQAIANSVNNINKVVIDSLNLKQRERIIAALKSFDIHIQLR</sequence>
<gene>
    <name evidence="1" type="primary">dtdA</name>
    <name type="ordered locus">LS215_0052</name>
</gene>
<comment type="function">
    <text evidence="1">D-aminoacyl-tRNA deacylase with broad substrate specificity. By recycling D-aminoacyl-tRNA to D-amino acids and free tRNA molecules, this enzyme counteracts the toxicity associated with the formation of D-aminoacyl-tRNA entities in vivo.</text>
</comment>
<comment type="catalytic activity">
    <reaction evidence="1">
        <text>a D-aminoacyl-tRNA + H2O = a tRNA + a D-alpha-amino acid + H(+)</text>
        <dbReference type="Rhea" id="RHEA:13953"/>
        <dbReference type="Rhea" id="RHEA-COMP:10123"/>
        <dbReference type="Rhea" id="RHEA-COMP:10124"/>
        <dbReference type="ChEBI" id="CHEBI:15377"/>
        <dbReference type="ChEBI" id="CHEBI:15378"/>
        <dbReference type="ChEBI" id="CHEBI:59871"/>
        <dbReference type="ChEBI" id="CHEBI:78442"/>
        <dbReference type="ChEBI" id="CHEBI:79333"/>
        <dbReference type="EC" id="3.1.1.96"/>
    </reaction>
</comment>
<comment type="catalytic activity">
    <reaction evidence="1">
        <text>glycyl-tRNA(Ala) + H2O = tRNA(Ala) + glycine + H(+)</text>
        <dbReference type="Rhea" id="RHEA:53744"/>
        <dbReference type="Rhea" id="RHEA-COMP:9657"/>
        <dbReference type="Rhea" id="RHEA-COMP:13640"/>
        <dbReference type="ChEBI" id="CHEBI:15377"/>
        <dbReference type="ChEBI" id="CHEBI:15378"/>
        <dbReference type="ChEBI" id="CHEBI:57305"/>
        <dbReference type="ChEBI" id="CHEBI:78442"/>
        <dbReference type="ChEBI" id="CHEBI:78522"/>
        <dbReference type="EC" id="3.1.1.96"/>
    </reaction>
</comment>
<comment type="cofactor">
    <cofactor evidence="1">
        <name>Zn(2+)</name>
        <dbReference type="ChEBI" id="CHEBI:29105"/>
    </cofactor>
    <text evidence="1">Binds 2 Zn(2+) ions per subunit.</text>
</comment>
<comment type="subunit">
    <text evidence="1">Monomer.</text>
</comment>
<comment type="similarity">
    <text evidence="1">Belongs to the DtdA deacylase family.</text>
</comment>
<organism>
    <name type="scientific">Saccharolobus islandicus (strain L.S.2.15 / Lassen #1)</name>
    <name type="common">Sulfolobus islandicus</name>
    <dbReference type="NCBI Taxonomy" id="429572"/>
    <lineage>
        <taxon>Archaea</taxon>
        <taxon>Thermoproteota</taxon>
        <taxon>Thermoprotei</taxon>
        <taxon>Sulfolobales</taxon>
        <taxon>Sulfolobaceae</taxon>
        <taxon>Saccharolobus</taxon>
    </lineage>
</organism>
<accession>C3MJC8</accession>
<name>DTDA_SACI2</name>
<dbReference type="EC" id="3.1.1.96" evidence="1"/>
<dbReference type="EMBL" id="CP001399">
    <property type="protein sequence ID" value="ACP34206.1"/>
    <property type="molecule type" value="Genomic_DNA"/>
</dbReference>
<dbReference type="RefSeq" id="WP_012710231.1">
    <property type="nucleotide sequence ID" value="NC_012589.1"/>
</dbReference>
<dbReference type="SMR" id="C3MJC8"/>
<dbReference type="KEGG" id="sis:LS215_0052"/>
<dbReference type="HOGENOM" id="CLU_056464_1_0_2"/>
<dbReference type="OrthoDB" id="9863at2157"/>
<dbReference type="Proteomes" id="UP000001747">
    <property type="component" value="Chromosome"/>
</dbReference>
<dbReference type="GO" id="GO:0051499">
    <property type="term" value="F:D-aminoacyl-tRNA deacylase activity"/>
    <property type="evidence" value="ECO:0007669"/>
    <property type="project" value="UniProtKB-UniRule"/>
</dbReference>
<dbReference type="GO" id="GO:0008270">
    <property type="term" value="F:zinc ion binding"/>
    <property type="evidence" value="ECO:0007669"/>
    <property type="project" value="UniProtKB-UniRule"/>
</dbReference>
<dbReference type="GO" id="GO:0019478">
    <property type="term" value="P:D-amino acid catabolic process"/>
    <property type="evidence" value="ECO:0007669"/>
    <property type="project" value="UniProtKB-UniRule"/>
</dbReference>
<dbReference type="Gene3D" id="3.40.50.10700">
    <property type="entry name" value="AF0625-like"/>
    <property type="match status" value="1"/>
</dbReference>
<dbReference type="Gene3D" id="3.40.630.50">
    <property type="entry name" value="AF0625-like"/>
    <property type="match status" value="1"/>
</dbReference>
<dbReference type="HAMAP" id="MF_00562">
    <property type="entry name" value="Deacylase_DtdA"/>
    <property type="match status" value="1"/>
</dbReference>
<dbReference type="InterPro" id="IPR018033">
    <property type="entry name" value="Deacylase_DtdA_archaea"/>
</dbReference>
<dbReference type="InterPro" id="IPR007508">
    <property type="entry name" value="DtdA"/>
</dbReference>
<dbReference type="NCBIfam" id="NF003070">
    <property type="entry name" value="PRK03995.1-1"/>
    <property type="match status" value="1"/>
</dbReference>
<dbReference type="PANTHER" id="PTHR34667">
    <property type="entry name" value="D-AMINOACYL-TRNA DEACYLASE"/>
    <property type="match status" value="1"/>
</dbReference>
<dbReference type="PANTHER" id="PTHR34667:SF1">
    <property type="entry name" value="D-AMINOACYL-TRNA DEACYLASE"/>
    <property type="match status" value="1"/>
</dbReference>
<dbReference type="Pfam" id="PF04414">
    <property type="entry name" value="tRNA_deacylase"/>
    <property type="match status" value="1"/>
</dbReference>
<dbReference type="PIRSF" id="PIRSF016210">
    <property type="entry name" value="UCP016210"/>
    <property type="match status" value="1"/>
</dbReference>
<dbReference type="SUPFAM" id="SSF142535">
    <property type="entry name" value="AF0625-like"/>
    <property type="match status" value="1"/>
</dbReference>
<feature type="chain" id="PRO_1000212046" description="D-aminoacyl-tRNA deacylase">
    <location>
        <begin position="1"/>
        <end position="237"/>
    </location>
</feature>
<evidence type="ECO:0000255" key="1">
    <source>
        <dbReference type="HAMAP-Rule" id="MF_00562"/>
    </source>
</evidence>
<reference key="1">
    <citation type="journal article" date="2009" name="Proc. Natl. Acad. Sci. U.S.A.">
        <title>Biogeography of the Sulfolobus islandicus pan-genome.</title>
        <authorList>
            <person name="Reno M.L."/>
            <person name="Held N.L."/>
            <person name="Fields C.J."/>
            <person name="Burke P.V."/>
            <person name="Whitaker R.J."/>
        </authorList>
    </citation>
    <scope>NUCLEOTIDE SEQUENCE [LARGE SCALE GENOMIC DNA]</scope>
    <source>
        <strain>L.S.2.15 / Lassen #1</strain>
    </source>
</reference>
<protein>
    <recommendedName>
        <fullName evidence="1">D-aminoacyl-tRNA deacylase</fullName>
        <ecNumber evidence="1">3.1.1.96</ecNumber>
    </recommendedName>
    <alternativeName>
        <fullName>D-tyrosyl-tRNA(Tyr) deacylase</fullName>
    </alternativeName>
</protein>
<keyword id="KW-0378">Hydrolase</keyword>
<keyword id="KW-0479">Metal-binding</keyword>
<keyword id="KW-0862">Zinc</keyword>